<keyword id="KW-0449">Lipoprotein</keyword>
<keyword id="KW-0472">Membrane</keyword>
<keyword id="KW-1185">Reference proteome</keyword>
<keyword id="KW-0677">Repeat</keyword>
<keyword id="KW-0926">Vacuole</keyword>
<comment type="function">
    <text evidence="1">Functions in both vacuole inheritance and protein targeting from the cytoplasm to vacuole.</text>
</comment>
<comment type="subcellular location">
    <subcellularLocation>
        <location evidence="1">Vacuole membrane</location>
        <topology evidence="1">Lipid-anchor</topology>
    </subcellularLocation>
</comment>
<comment type="similarity">
    <text evidence="3">Belongs to the beta-catenin family.</text>
</comment>
<reference key="1">
    <citation type="journal article" date="2004" name="Nature">
        <title>Genome evolution in yeasts.</title>
        <authorList>
            <person name="Dujon B."/>
            <person name="Sherman D."/>
            <person name="Fischer G."/>
            <person name="Durrens P."/>
            <person name="Casaregola S."/>
            <person name="Lafontaine I."/>
            <person name="de Montigny J."/>
            <person name="Marck C."/>
            <person name="Neuveglise C."/>
            <person name="Talla E."/>
            <person name="Goffard N."/>
            <person name="Frangeul L."/>
            <person name="Aigle M."/>
            <person name="Anthouard V."/>
            <person name="Babour A."/>
            <person name="Barbe V."/>
            <person name="Barnay S."/>
            <person name="Blanchin S."/>
            <person name="Beckerich J.-M."/>
            <person name="Beyne E."/>
            <person name="Bleykasten C."/>
            <person name="Boisrame A."/>
            <person name="Boyer J."/>
            <person name="Cattolico L."/>
            <person name="Confanioleri F."/>
            <person name="de Daruvar A."/>
            <person name="Despons L."/>
            <person name="Fabre E."/>
            <person name="Fairhead C."/>
            <person name="Ferry-Dumazet H."/>
            <person name="Groppi A."/>
            <person name="Hantraye F."/>
            <person name="Hennequin C."/>
            <person name="Jauniaux N."/>
            <person name="Joyet P."/>
            <person name="Kachouri R."/>
            <person name="Kerrest A."/>
            <person name="Koszul R."/>
            <person name="Lemaire M."/>
            <person name="Lesur I."/>
            <person name="Ma L."/>
            <person name="Muller H."/>
            <person name="Nicaud J.-M."/>
            <person name="Nikolski M."/>
            <person name="Oztas S."/>
            <person name="Ozier-Kalogeropoulos O."/>
            <person name="Pellenz S."/>
            <person name="Potier S."/>
            <person name="Richard G.-F."/>
            <person name="Straub M.-L."/>
            <person name="Suleau A."/>
            <person name="Swennen D."/>
            <person name="Tekaia F."/>
            <person name="Wesolowski-Louvel M."/>
            <person name="Westhof E."/>
            <person name="Wirth B."/>
            <person name="Zeniou-Meyer M."/>
            <person name="Zivanovic Y."/>
            <person name="Bolotin-Fukuhara M."/>
            <person name="Thierry A."/>
            <person name="Bouchier C."/>
            <person name="Caudron B."/>
            <person name="Scarpelli C."/>
            <person name="Gaillardin C."/>
            <person name="Weissenbach J."/>
            <person name="Wincker P."/>
            <person name="Souciet J.-L."/>
        </authorList>
    </citation>
    <scope>NUCLEOTIDE SEQUENCE [LARGE SCALE GENOMIC DNA]</scope>
    <source>
        <strain>CLIB 122 / E 150</strain>
    </source>
</reference>
<gene>
    <name type="primary">VAC8</name>
    <name type="ordered locus">YALI0E13992g</name>
</gene>
<dbReference type="EMBL" id="CR382131">
    <property type="protein sequence ID" value="CAG79517.1"/>
    <property type="molecule type" value="Genomic_DNA"/>
</dbReference>
<dbReference type="RefSeq" id="XP_503924.1">
    <property type="nucleotide sequence ID" value="XM_503924.1"/>
</dbReference>
<dbReference type="SMR" id="Q6C5Y8"/>
<dbReference type="FunCoup" id="Q6C5Y8">
    <property type="interactions" value="129"/>
</dbReference>
<dbReference type="STRING" id="284591.Q6C5Y8"/>
<dbReference type="EnsemblFungi" id="CAG79517">
    <property type="protein sequence ID" value="CAG79517"/>
    <property type="gene ID" value="YALI0_E13992g"/>
</dbReference>
<dbReference type="KEGG" id="yli:2911494"/>
<dbReference type="VEuPathDB" id="FungiDB:YALI0_E13992g"/>
<dbReference type="HOGENOM" id="CLU_021483_0_0_1"/>
<dbReference type="InParanoid" id="Q6C5Y8"/>
<dbReference type="OMA" id="VWDKPDG"/>
<dbReference type="OrthoDB" id="19831at4891"/>
<dbReference type="Proteomes" id="UP000001300">
    <property type="component" value="Chromosome E"/>
</dbReference>
<dbReference type="GO" id="GO:0000329">
    <property type="term" value="C:fungal-type vacuole membrane"/>
    <property type="evidence" value="ECO:0000318"/>
    <property type="project" value="GO_Central"/>
</dbReference>
<dbReference type="GO" id="GO:0043495">
    <property type="term" value="F:protein-membrane adaptor activity"/>
    <property type="evidence" value="ECO:0000318"/>
    <property type="project" value="GO_Central"/>
</dbReference>
<dbReference type="GO" id="GO:0000045">
    <property type="term" value="P:autophagosome assembly"/>
    <property type="evidence" value="ECO:0000318"/>
    <property type="project" value="GO_Central"/>
</dbReference>
<dbReference type="GO" id="GO:0071562">
    <property type="term" value="P:nucleus-vacuole junction assembly"/>
    <property type="evidence" value="ECO:0000318"/>
    <property type="project" value="GO_Central"/>
</dbReference>
<dbReference type="FunFam" id="1.25.10.10:FF:000243">
    <property type="entry name" value="Putative Vacuolar protein 8"/>
    <property type="match status" value="1"/>
</dbReference>
<dbReference type="FunFam" id="1.25.10.10:FF:000131">
    <property type="entry name" value="Vacuolar protein 8"/>
    <property type="match status" value="1"/>
</dbReference>
<dbReference type="Gene3D" id="1.25.10.10">
    <property type="entry name" value="Leucine-rich Repeat Variant"/>
    <property type="match status" value="3"/>
</dbReference>
<dbReference type="InterPro" id="IPR011989">
    <property type="entry name" value="ARM-like"/>
</dbReference>
<dbReference type="InterPro" id="IPR016024">
    <property type="entry name" value="ARM-type_fold"/>
</dbReference>
<dbReference type="InterPro" id="IPR000225">
    <property type="entry name" value="Armadillo"/>
</dbReference>
<dbReference type="InterPro" id="IPR045156">
    <property type="entry name" value="Vac8"/>
</dbReference>
<dbReference type="PANTHER" id="PTHR47249">
    <property type="entry name" value="VACUOLAR PROTEIN 8"/>
    <property type="match status" value="1"/>
</dbReference>
<dbReference type="PANTHER" id="PTHR47249:SF1">
    <property type="entry name" value="VACUOLAR PROTEIN 8"/>
    <property type="match status" value="1"/>
</dbReference>
<dbReference type="Pfam" id="PF00514">
    <property type="entry name" value="Arm"/>
    <property type="match status" value="8"/>
</dbReference>
<dbReference type="SMART" id="SM00185">
    <property type="entry name" value="ARM"/>
    <property type="match status" value="9"/>
</dbReference>
<dbReference type="SUPFAM" id="SSF48371">
    <property type="entry name" value="ARM repeat"/>
    <property type="match status" value="2"/>
</dbReference>
<dbReference type="PROSITE" id="PS50176">
    <property type="entry name" value="ARM_REPEAT"/>
    <property type="match status" value="7"/>
</dbReference>
<protein>
    <recommendedName>
        <fullName>Vacuolar protein 8</fullName>
    </recommendedName>
</protein>
<organism>
    <name type="scientific">Yarrowia lipolytica (strain CLIB 122 / E 150)</name>
    <name type="common">Yeast</name>
    <name type="synonym">Candida lipolytica</name>
    <dbReference type="NCBI Taxonomy" id="284591"/>
    <lineage>
        <taxon>Eukaryota</taxon>
        <taxon>Fungi</taxon>
        <taxon>Dikarya</taxon>
        <taxon>Ascomycota</taxon>
        <taxon>Saccharomycotina</taxon>
        <taxon>Dipodascomycetes</taxon>
        <taxon>Dipodascales</taxon>
        <taxon>Dipodascales incertae sedis</taxon>
        <taxon>Yarrowia</taxon>
    </lineage>
</organism>
<name>VAC8_YARLI</name>
<proteinExistence type="inferred from homology"/>
<evidence type="ECO:0000250" key="1"/>
<evidence type="ECO:0000256" key="2">
    <source>
        <dbReference type="SAM" id="MobiDB-lite"/>
    </source>
</evidence>
<evidence type="ECO:0000305" key="3"/>
<accession>Q6C5Y8</accession>
<feature type="chain" id="PRO_0000256218" description="Vacuolar protein 8">
    <location>
        <begin position="1"/>
        <end position="573"/>
    </location>
</feature>
<feature type="repeat" description="ARM 1">
    <location>
        <begin position="60"/>
        <end position="97"/>
    </location>
</feature>
<feature type="repeat" description="ARM 2">
    <location>
        <begin position="98"/>
        <end position="137"/>
    </location>
</feature>
<feature type="repeat" description="ARM 3">
    <location>
        <begin position="139"/>
        <end position="178"/>
    </location>
</feature>
<feature type="repeat" description="ARM 4">
    <location>
        <begin position="180"/>
        <end position="219"/>
    </location>
</feature>
<feature type="repeat" description="ARM 5">
    <location>
        <begin position="221"/>
        <end position="260"/>
    </location>
</feature>
<feature type="repeat" description="ARM 6">
    <location>
        <begin position="264"/>
        <end position="303"/>
    </location>
</feature>
<feature type="repeat" description="ARM 7">
    <location>
        <begin position="305"/>
        <end position="344"/>
    </location>
</feature>
<feature type="repeat" description="ARM 8">
    <location>
        <begin position="346"/>
        <end position="386"/>
    </location>
</feature>
<feature type="repeat" description="ARM 9">
    <location>
        <begin position="430"/>
        <end position="469"/>
    </location>
</feature>
<feature type="region of interest" description="Disordered" evidence="2">
    <location>
        <begin position="1"/>
        <end position="36"/>
    </location>
</feature>
<feature type="compositionally biased region" description="Polar residues" evidence="2">
    <location>
        <begin position="27"/>
        <end position="36"/>
    </location>
</feature>
<sequence>MAASAADRMGRQRMSGLSCSAPPRPTVVTNPGNKQDGNYAPVLAEDEREAVALLLRYLENRGEVDFFSNGPLRALSTLVYSDNIDLQRSAALAFAEITEKDIRPVNRDCLEPVLLLLQNTDPDIQRAASAALGNLAVNNENKVLIVEMGGFEPLIRQMMSPNVEVQCNAVGCITNLATHEANKSKIARSGALLPLTKLAKSKDMRVQRNATGALLNMTHSDQNRQELVNAGAIPILVSLLSSRDPDVQYYSTTALSNIAVDESNRKKLSSSEPRLVEHLIKLMDSGSPRVQCQAALALRNLASDSDYQLEIVKANGLPHLFNLFQSTHTPLVLAAVACIRNISIHPLNETPIIEAGFLKTLVELLGASDNEEIQCHTISTLRNLAASSERNKLEIVEAGAVQKCKELVLDAPRLVQSEMTACLAVLALGDELKGTLLELGIAEVLIPLTLSDNIEVQGNSAAALGNLSSKVGNYDTFVNHWNEPSGGIREFLIRFLTSGDSTFGHIAVWTVLQLLESKDQRLKDLLKNSNEIVDAIHQLSSMNSDGADGDGEDMRDSKSEVVMLAKKVAPLLK</sequence>